<proteinExistence type="inferred from homology"/>
<name>RL31B_SHOC1</name>
<accession>Q5WB51</accession>
<organism>
    <name type="scientific">Shouchella clausii (strain KSM-K16)</name>
    <name type="common">Alkalihalobacillus clausii</name>
    <dbReference type="NCBI Taxonomy" id="66692"/>
    <lineage>
        <taxon>Bacteria</taxon>
        <taxon>Bacillati</taxon>
        <taxon>Bacillota</taxon>
        <taxon>Bacilli</taxon>
        <taxon>Bacillales</taxon>
        <taxon>Bacillaceae</taxon>
        <taxon>Shouchella</taxon>
    </lineage>
</organism>
<protein>
    <recommendedName>
        <fullName evidence="1">Large ribosomal subunit protein bL31B</fullName>
    </recommendedName>
    <alternativeName>
        <fullName evidence="2">50S ribosomal protein L31 type B</fullName>
    </alternativeName>
</protein>
<gene>
    <name evidence="1" type="primary">rpmE2</name>
    <name type="synonym">rpmE</name>
    <name type="ordered locus">ABC3878</name>
</gene>
<dbReference type="EMBL" id="AP006627">
    <property type="protein sequence ID" value="BAD66409.1"/>
    <property type="molecule type" value="Genomic_DNA"/>
</dbReference>
<dbReference type="RefSeq" id="WP_011248712.1">
    <property type="nucleotide sequence ID" value="NC_006582.1"/>
</dbReference>
<dbReference type="SMR" id="Q5WB51"/>
<dbReference type="STRING" id="66692.ABC3878"/>
<dbReference type="KEGG" id="bcl:ABC3878"/>
<dbReference type="eggNOG" id="COG0254">
    <property type="taxonomic scope" value="Bacteria"/>
</dbReference>
<dbReference type="HOGENOM" id="CLU_114306_2_2_9"/>
<dbReference type="OrthoDB" id="9803251at2"/>
<dbReference type="Proteomes" id="UP000001168">
    <property type="component" value="Chromosome"/>
</dbReference>
<dbReference type="GO" id="GO:1990904">
    <property type="term" value="C:ribonucleoprotein complex"/>
    <property type="evidence" value="ECO:0007669"/>
    <property type="project" value="UniProtKB-KW"/>
</dbReference>
<dbReference type="GO" id="GO:0005840">
    <property type="term" value="C:ribosome"/>
    <property type="evidence" value="ECO:0007669"/>
    <property type="project" value="UniProtKB-KW"/>
</dbReference>
<dbReference type="GO" id="GO:0003735">
    <property type="term" value="F:structural constituent of ribosome"/>
    <property type="evidence" value="ECO:0007669"/>
    <property type="project" value="InterPro"/>
</dbReference>
<dbReference type="GO" id="GO:0006412">
    <property type="term" value="P:translation"/>
    <property type="evidence" value="ECO:0007669"/>
    <property type="project" value="UniProtKB-UniRule"/>
</dbReference>
<dbReference type="Gene3D" id="4.10.830.30">
    <property type="entry name" value="Ribosomal protein L31"/>
    <property type="match status" value="1"/>
</dbReference>
<dbReference type="HAMAP" id="MF_00502">
    <property type="entry name" value="Ribosomal_bL31_2"/>
    <property type="match status" value="1"/>
</dbReference>
<dbReference type="InterPro" id="IPR034704">
    <property type="entry name" value="Ribosomal_bL28/bL31-like_sf"/>
</dbReference>
<dbReference type="InterPro" id="IPR002150">
    <property type="entry name" value="Ribosomal_bL31"/>
</dbReference>
<dbReference type="InterPro" id="IPR027493">
    <property type="entry name" value="Ribosomal_bL31_B"/>
</dbReference>
<dbReference type="InterPro" id="IPR042105">
    <property type="entry name" value="Ribosomal_bL31_sf"/>
</dbReference>
<dbReference type="NCBIfam" id="TIGR00105">
    <property type="entry name" value="L31"/>
    <property type="match status" value="1"/>
</dbReference>
<dbReference type="NCBIfam" id="NF002462">
    <property type="entry name" value="PRK01678.1"/>
    <property type="match status" value="1"/>
</dbReference>
<dbReference type="PANTHER" id="PTHR33280">
    <property type="entry name" value="50S RIBOSOMAL PROTEIN L31, CHLOROPLASTIC"/>
    <property type="match status" value="1"/>
</dbReference>
<dbReference type="PANTHER" id="PTHR33280:SF1">
    <property type="entry name" value="LARGE RIBOSOMAL SUBUNIT PROTEIN BL31C"/>
    <property type="match status" value="1"/>
</dbReference>
<dbReference type="Pfam" id="PF01197">
    <property type="entry name" value="Ribosomal_L31"/>
    <property type="match status" value="1"/>
</dbReference>
<dbReference type="PRINTS" id="PR01249">
    <property type="entry name" value="RIBOSOMALL31"/>
</dbReference>
<dbReference type="SUPFAM" id="SSF143800">
    <property type="entry name" value="L28p-like"/>
    <property type="match status" value="1"/>
</dbReference>
<dbReference type="PROSITE" id="PS01143">
    <property type="entry name" value="RIBOSOMAL_L31"/>
    <property type="match status" value="1"/>
</dbReference>
<keyword id="KW-1185">Reference proteome</keyword>
<keyword id="KW-0687">Ribonucleoprotein</keyword>
<keyword id="KW-0689">Ribosomal protein</keyword>
<comment type="subunit">
    <text evidence="1">Part of the 50S ribosomal subunit.</text>
</comment>
<comment type="similarity">
    <text evidence="1">Belongs to the bacterial ribosomal protein bL31 family. Type B subfamily.</text>
</comment>
<feature type="chain" id="PRO_0000173203" description="Large ribosomal subunit protein bL31B">
    <location>
        <begin position="1"/>
        <end position="80"/>
    </location>
</feature>
<sequence>MKPEIHPTYQKVVFMDTSTGFKFLTGSTRGSSETIEWEDGNTYPLIKVEISSDSHPFYTGKQKLADAGGRVDRFKKKYNL</sequence>
<evidence type="ECO:0000255" key="1">
    <source>
        <dbReference type="HAMAP-Rule" id="MF_00502"/>
    </source>
</evidence>
<evidence type="ECO:0000305" key="2"/>
<reference key="1">
    <citation type="submission" date="2003-10" db="EMBL/GenBank/DDBJ databases">
        <title>The complete genome sequence of the alkaliphilic Bacillus clausii KSM-K16.</title>
        <authorList>
            <person name="Takaki Y."/>
            <person name="Kageyama Y."/>
            <person name="Shimamura S."/>
            <person name="Suzuki H."/>
            <person name="Nishi S."/>
            <person name="Hatada Y."/>
            <person name="Kawai S."/>
            <person name="Ito S."/>
            <person name="Horikoshi K."/>
        </authorList>
    </citation>
    <scope>NUCLEOTIDE SEQUENCE [LARGE SCALE GENOMIC DNA]</scope>
    <source>
        <strain>KSM-K16</strain>
    </source>
</reference>